<reference key="1">
    <citation type="journal article" date="2016" name="Genome Announc.">
        <title>Complete genome sequence of Alkaliphilus metalliredigens strain QYMF, an alkaliphilic and metal-reducing bacterium isolated from borax-contaminated leachate ponds.</title>
        <authorList>
            <person name="Hwang C."/>
            <person name="Copeland A."/>
            <person name="Lucas S."/>
            <person name="Lapidus A."/>
            <person name="Barry K."/>
            <person name="Detter J.C."/>
            <person name="Glavina Del Rio T."/>
            <person name="Hammon N."/>
            <person name="Israni S."/>
            <person name="Dalin E."/>
            <person name="Tice H."/>
            <person name="Pitluck S."/>
            <person name="Chertkov O."/>
            <person name="Brettin T."/>
            <person name="Bruce D."/>
            <person name="Han C."/>
            <person name="Schmutz J."/>
            <person name="Larimer F."/>
            <person name="Land M.L."/>
            <person name="Hauser L."/>
            <person name="Kyrpides N."/>
            <person name="Mikhailova N."/>
            <person name="Ye Q."/>
            <person name="Zhou J."/>
            <person name="Richardson P."/>
            <person name="Fields M.W."/>
        </authorList>
    </citation>
    <scope>NUCLEOTIDE SEQUENCE [LARGE SCALE GENOMIC DNA]</scope>
    <source>
        <strain>QYMF</strain>
    </source>
</reference>
<protein>
    <recommendedName>
        <fullName evidence="1">UPF0178 protein Amet_2995</fullName>
    </recommendedName>
</protein>
<gene>
    <name type="ordered locus">Amet_2995</name>
</gene>
<keyword id="KW-1185">Reference proteome</keyword>
<comment type="similarity">
    <text evidence="1">Belongs to the UPF0178 family.</text>
</comment>
<organism>
    <name type="scientific">Alkaliphilus metalliredigens (strain QYMF)</name>
    <dbReference type="NCBI Taxonomy" id="293826"/>
    <lineage>
        <taxon>Bacteria</taxon>
        <taxon>Bacillati</taxon>
        <taxon>Bacillota</taxon>
        <taxon>Clostridia</taxon>
        <taxon>Peptostreptococcales</taxon>
        <taxon>Natronincolaceae</taxon>
        <taxon>Alkaliphilus</taxon>
    </lineage>
</organism>
<evidence type="ECO:0000255" key="1">
    <source>
        <dbReference type="HAMAP-Rule" id="MF_00489"/>
    </source>
</evidence>
<dbReference type="EMBL" id="CP000724">
    <property type="protein sequence ID" value="ABR49139.1"/>
    <property type="molecule type" value="Genomic_DNA"/>
</dbReference>
<dbReference type="RefSeq" id="WP_012064107.1">
    <property type="nucleotide sequence ID" value="NC_009633.1"/>
</dbReference>
<dbReference type="SMR" id="A6TSH1"/>
<dbReference type="STRING" id="293826.Amet_2995"/>
<dbReference type="KEGG" id="amt:Amet_2995"/>
<dbReference type="eggNOG" id="COG1671">
    <property type="taxonomic scope" value="Bacteria"/>
</dbReference>
<dbReference type="HOGENOM" id="CLU_106619_0_0_9"/>
<dbReference type="OrthoDB" id="9798918at2"/>
<dbReference type="Proteomes" id="UP000001572">
    <property type="component" value="Chromosome"/>
</dbReference>
<dbReference type="HAMAP" id="MF_00489">
    <property type="entry name" value="UPF0178"/>
    <property type="match status" value="1"/>
</dbReference>
<dbReference type="InterPro" id="IPR003791">
    <property type="entry name" value="UPF0178"/>
</dbReference>
<dbReference type="NCBIfam" id="NF001095">
    <property type="entry name" value="PRK00124.1"/>
    <property type="match status" value="1"/>
</dbReference>
<dbReference type="PANTHER" id="PTHR35146">
    <property type="entry name" value="UPF0178 PROTEIN YAII"/>
    <property type="match status" value="1"/>
</dbReference>
<dbReference type="PANTHER" id="PTHR35146:SF1">
    <property type="entry name" value="UPF0178 PROTEIN YAII"/>
    <property type="match status" value="1"/>
</dbReference>
<dbReference type="Pfam" id="PF02639">
    <property type="entry name" value="DUF188"/>
    <property type="match status" value="1"/>
</dbReference>
<name>Y2995_ALKMQ</name>
<accession>A6TSH1</accession>
<feature type="chain" id="PRO_1000060441" description="UPF0178 protein Amet_2995">
    <location>
        <begin position="1"/>
        <end position="155"/>
    </location>
</feature>
<sequence length="155" mass="17506">MKVIIDGDACPVKNILFNICEHHDLELILVHSIAHMSKGEQKIETIIVDNEAEAADIMIMNRTKAGDLVITADTGLAALVLGKRAFVLSPWGHFYTNDNIGSLLDRRYLNRKMMLQGGRVKGPKKRNKEDDHRFQQALESFLEKHLRNSSKQEGV</sequence>
<proteinExistence type="inferred from homology"/>